<keyword id="KW-0067">ATP-binding</keyword>
<keyword id="KW-0342">GTP-binding</keyword>
<keyword id="KW-0391">Immunity</keyword>
<keyword id="KW-0399">Innate immunity</keyword>
<keyword id="KW-0460">Magnesium</keyword>
<keyword id="KW-0464">Manganese</keyword>
<keyword id="KW-0479">Metal-binding</keyword>
<keyword id="KW-0547">Nucleotide-binding</keyword>
<keyword id="KW-0548">Nucleotidyltransferase</keyword>
<keyword id="KW-1185">Reference proteome</keyword>
<keyword id="KW-0808">Transferase</keyword>
<sequence>MPVGSRQNRVQAVRKVSGSTDSTIPREAGIYPIRYTERKERKDVQTVENGTNEDSRASQSRGRRRRQPTSRTLRQTSQSRPEVLERNESGSDCKKGVHSHSSARKVEREGSRCASRGLHLSSTTRCTAXELDVAKQEEKEEEDNKEGYADEEQKIENSTQERKVVNTSMEDKATSHSTKGSFRLTNSDSNKELHKAIKVRGSLSKTDITEKAKFVNEVVEKEIISQVFKIDNRFTFDILHAGSYYERLKVGEADEFDIMVQLNAAKLSNIFQPRFCVARRHSRHLVGFAYLEYQSHFDGHKKWEDLLETGGPDSRPLLSPKLILEHFKELLSQRLHQINCVGKQPWRSYCEPSLHGPAVKLTFCLANDKTLDIDVVLCIQSQHWPPVANNWGVLNPLQWPGAQQVENIKKRGCHVVPKVNPRDQKCWRTSFSLAEKDLLSPKSIDEDKEHYKIVKVIFERHKASLEPLCSYHLKTLFLWLRSDGNWTEKRTQFKVIEYFIQQLLEKVRMKELPHFFIGHNLNLFSDLSDAQVTNITTCLKEIIKNK</sequence>
<reference key="1">
    <citation type="journal article" date="2015" name="Proc. Natl. Acad. Sci. U.S.A.">
        <title>The genome of Aiptasia, a sea anemone model for coral symbiosis.</title>
        <authorList>
            <person name="Baumgarten S."/>
            <person name="Simakov O."/>
            <person name="Esherick L.Y."/>
            <person name="Liew Y.J."/>
            <person name="Lehnert E.M."/>
            <person name="Michell C.T."/>
            <person name="Li Y."/>
            <person name="Hambleton E.A."/>
            <person name="Guse A."/>
            <person name="Oates M.E."/>
            <person name="Gough J."/>
            <person name="Weis V.M."/>
            <person name="Aranda M."/>
            <person name="Pringle J.R."/>
            <person name="Voolstra C.R."/>
        </authorList>
    </citation>
    <scope>NUCLEOTIDE SEQUENCE [LARGE SCALE GENOMIC DNA]</scope>
</reference>
<reference key="2">
    <citation type="journal article" date="2023" name="Cell">
        <title>cGLRs are a diverse family of pattern recognition receptors in innate immunity.</title>
        <authorList>
            <person name="Li Y."/>
            <person name="Slavik K.M."/>
            <person name="Toyoda H.C."/>
            <person name="Morehouse B.R."/>
            <person name="de Oliveira Mann C.C."/>
            <person name="Elek A."/>
            <person name="Levy S."/>
            <person name="Wang Z."/>
            <person name="Mears K.S."/>
            <person name="Liu J."/>
            <person name="Kashin D."/>
            <person name="Guo X."/>
            <person name="Mass T."/>
            <person name="Sebe-Pedros A."/>
            <person name="Schwede F."/>
            <person name="Kranzusch P.J."/>
        </authorList>
    </citation>
    <scope>FUNCTION</scope>
    <scope>CATALYTIC ACTIVITY</scope>
</reference>
<accession>A0A913XCT1</accession>
<proteinExistence type="evidence at protein level"/>
<feature type="chain" id="PRO_0000460018" description="Cyclic GMP-AMP synthase-like receptor">
    <location>
        <begin position="1"/>
        <end position="546"/>
    </location>
</feature>
<feature type="region of interest" description="Disordered" evidence="3">
    <location>
        <begin position="1"/>
        <end position="116"/>
    </location>
</feature>
<feature type="region of interest" description="Disordered" evidence="3">
    <location>
        <begin position="134"/>
        <end position="186"/>
    </location>
</feature>
<feature type="compositionally biased region" description="Polar residues" evidence="3">
    <location>
        <begin position="1"/>
        <end position="10"/>
    </location>
</feature>
<feature type="compositionally biased region" description="Basic and acidic residues" evidence="3">
    <location>
        <begin position="35"/>
        <end position="45"/>
    </location>
</feature>
<feature type="compositionally biased region" description="Low complexity" evidence="3">
    <location>
        <begin position="69"/>
        <end position="80"/>
    </location>
</feature>
<feature type="compositionally biased region" description="Basic and acidic residues" evidence="3">
    <location>
        <begin position="82"/>
        <end position="95"/>
    </location>
</feature>
<feature type="compositionally biased region" description="Basic and acidic residues" evidence="3">
    <location>
        <begin position="145"/>
        <end position="174"/>
    </location>
</feature>
<feature type="compositionally biased region" description="Polar residues" evidence="3">
    <location>
        <begin position="175"/>
        <end position="186"/>
    </location>
</feature>
<feature type="binding site" evidence="2">
    <location>
        <position position="243"/>
    </location>
    <ligand>
        <name>ATP</name>
        <dbReference type="ChEBI" id="CHEBI:30616"/>
    </ligand>
</feature>
<feature type="binding site" evidence="2">
    <location>
        <begin position="255"/>
        <end position="257"/>
    </location>
    <ligand>
        <name>ATP</name>
        <dbReference type="ChEBI" id="CHEBI:30616"/>
    </ligand>
</feature>
<feature type="binding site" evidence="2">
    <location>
        <position position="255"/>
    </location>
    <ligand>
        <name>Mg(2+)</name>
        <dbReference type="ChEBI" id="CHEBI:18420"/>
        <note>catalytic</note>
    </ligand>
</feature>
<feature type="binding site" evidence="2">
    <location>
        <position position="257"/>
    </location>
    <ligand>
        <name>Mg(2+)</name>
        <dbReference type="ChEBI" id="CHEBI:18420"/>
        <note>catalytic</note>
    </ligand>
</feature>
<feature type="binding site" evidence="2">
    <location>
        <position position="374"/>
    </location>
    <ligand>
        <name>GTP</name>
        <dbReference type="ChEBI" id="CHEBI:37565"/>
    </ligand>
</feature>
<feature type="binding site" evidence="2">
    <location>
        <position position="374"/>
    </location>
    <ligand>
        <name>Mg(2+)</name>
        <dbReference type="ChEBI" id="CHEBI:18420"/>
        <note>catalytic</note>
    </ligand>
</feature>
<feature type="binding site" evidence="2">
    <location>
        <begin position="428"/>
        <end position="435"/>
    </location>
    <ligand>
        <name>GTP</name>
        <dbReference type="ChEBI" id="CHEBI:37565"/>
    </ligand>
</feature>
<feature type="binding site" evidence="2">
    <location>
        <begin position="432"/>
        <end position="435"/>
    </location>
    <ligand>
        <name>ATP</name>
        <dbReference type="ChEBI" id="CHEBI:30616"/>
    </ligand>
</feature>
<feature type="binding site" evidence="2">
    <location>
        <position position="455"/>
    </location>
    <ligand>
        <name>ATP</name>
        <dbReference type="ChEBI" id="CHEBI:30616"/>
    </ligand>
</feature>
<feature type="binding site" evidence="2">
    <location>
        <begin position="470"/>
        <end position="474"/>
    </location>
    <ligand>
        <name>ATP</name>
        <dbReference type="ChEBI" id="CHEBI:30616"/>
    </ligand>
</feature>
<gene>
    <name evidence="5" type="primary">cGLR</name>
</gene>
<protein>
    <recommendedName>
        <fullName>Cyclic GMP-AMP synthase-like receptor</fullName>
        <shortName evidence="5">Ep-cGLR</shortName>
        <ecNumber evidence="4">2.7.7.86</ecNumber>
    </recommendedName>
</protein>
<organism>
    <name type="scientific">Exaiptasia diaphana</name>
    <name type="common">Tropical sea anemone</name>
    <name type="synonym">Aiptasia pulchella</name>
    <dbReference type="NCBI Taxonomy" id="2652724"/>
    <lineage>
        <taxon>Eukaryota</taxon>
        <taxon>Metazoa</taxon>
        <taxon>Cnidaria</taxon>
        <taxon>Anthozoa</taxon>
        <taxon>Hexacorallia</taxon>
        <taxon>Actiniaria</taxon>
        <taxon>Aiptasiidae</taxon>
        <taxon>Exaiptasia</taxon>
    </lineage>
</organism>
<dbReference type="EC" id="2.7.7.86" evidence="4"/>
<dbReference type="EMBL" id="LJWW01000029">
    <property type="status" value="NOT_ANNOTATED_CDS"/>
    <property type="molecule type" value="Genomic_DNA"/>
</dbReference>
<dbReference type="EnsemblMetazoa" id="XM_021046395.2">
    <property type="protein sequence ID" value="XP_020902054.1"/>
    <property type="gene ID" value="LOC110240579"/>
</dbReference>
<dbReference type="OMA" id="IECWLGH"/>
<dbReference type="OrthoDB" id="6054650at2759"/>
<dbReference type="Proteomes" id="UP000887567">
    <property type="component" value="Unplaced"/>
</dbReference>
<dbReference type="GO" id="GO:0061501">
    <property type="term" value="F:2',3'-cyclic GMP-AMP synthase activity"/>
    <property type="evidence" value="ECO:0000314"/>
    <property type="project" value="UniProtKB"/>
</dbReference>
<dbReference type="GO" id="GO:0005524">
    <property type="term" value="F:ATP binding"/>
    <property type="evidence" value="ECO:0007669"/>
    <property type="project" value="UniProtKB-KW"/>
</dbReference>
<dbReference type="GO" id="GO:0005525">
    <property type="term" value="F:GTP binding"/>
    <property type="evidence" value="ECO:0007669"/>
    <property type="project" value="UniProtKB-KW"/>
</dbReference>
<dbReference type="GO" id="GO:0046872">
    <property type="term" value="F:metal ion binding"/>
    <property type="evidence" value="ECO:0007669"/>
    <property type="project" value="UniProtKB-KW"/>
</dbReference>
<dbReference type="GO" id="GO:0045087">
    <property type="term" value="P:innate immune response"/>
    <property type="evidence" value="ECO:0007669"/>
    <property type="project" value="UniProtKB-KW"/>
</dbReference>
<dbReference type="Gene3D" id="1.10.1410.40">
    <property type="match status" value="1"/>
</dbReference>
<dbReference type="Gene3D" id="3.30.460.90">
    <property type="match status" value="1"/>
</dbReference>
<dbReference type="InterPro" id="IPR046903">
    <property type="entry name" value="Mab-21-like_nuc_Trfase"/>
</dbReference>
<dbReference type="InterPro" id="IPR046906">
    <property type="entry name" value="Mab-21_HhH/H2TH-like"/>
</dbReference>
<dbReference type="InterPro" id="IPR024810">
    <property type="entry name" value="MAB21L/cGLR"/>
</dbReference>
<dbReference type="PANTHER" id="PTHR10656">
    <property type="entry name" value="CELL FATE DETERMINING PROTEIN MAB21-RELATED"/>
    <property type="match status" value="1"/>
</dbReference>
<dbReference type="PANTHER" id="PTHR10656:SF42">
    <property type="entry name" value="CYCLIC GMP-AMP SYNTHASE-LIKE PROTEIN-RELATED"/>
    <property type="match status" value="1"/>
</dbReference>
<dbReference type="Pfam" id="PF03281">
    <property type="entry name" value="Mab-21"/>
    <property type="match status" value="1"/>
</dbReference>
<dbReference type="Pfam" id="PF20266">
    <property type="entry name" value="Mab-21_C"/>
    <property type="match status" value="1"/>
</dbReference>
<dbReference type="SMART" id="SM01265">
    <property type="entry name" value="Mab-21"/>
    <property type="match status" value="1"/>
</dbReference>
<evidence type="ECO:0000250" key="1">
    <source>
        <dbReference type="UniProtKB" id="D6WI29"/>
    </source>
</evidence>
<evidence type="ECO:0000250" key="2">
    <source>
        <dbReference type="UniProtKB" id="Q8N884"/>
    </source>
</evidence>
<evidence type="ECO:0000256" key="3">
    <source>
        <dbReference type="SAM" id="MobiDB-lite"/>
    </source>
</evidence>
<evidence type="ECO:0000269" key="4">
    <source>
    </source>
</evidence>
<evidence type="ECO:0000303" key="5">
    <source>
    </source>
</evidence>
<evidence type="ECO:0000305" key="6"/>
<name>CGLR_EXADI</name>
<comment type="function">
    <text evidence="4">Nucleotidyltransferase that catalyzes the formation of cyclic GMP-AMP (2',3'-cGAMP) from ATP and GTP and plays a key role in innate immunity (PubMed:37379839). Directly binds some unknown ligand, activating the nucleotidyltransferase activity, leading to synthesis of 2',3'-cGAMP, a second messenger that binds to and activates Sting, thereby triggering the immune response via activation of the NF-kappa-B transcription factor (PubMed:37379839).</text>
</comment>
<comment type="catalytic activity">
    <reaction evidence="4">
        <text>GTP + ATP = 2',3'-cGAMP + 2 diphosphate</text>
        <dbReference type="Rhea" id="RHEA:42064"/>
        <dbReference type="ChEBI" id="CHEBI:30616"/>
        <dbReference type="ChEBI" id="CHEBI:33019"/>
        <dbReference type="ChEBI" id="CHEBI:37565"/>
        <dbReference type="ChEBI" id="CHEBI:143093"/>
        <dbReference type="EC" id="2.7.7.86"/>
    </reaction>
    <physiologicalReaction direction="left-to-right" evidence="4">
        <dbReference type="Rhea" id="RHEA:42065"/>
    </physiologicalReaction>
</comment>
<comment type="catalytic activity">
    <reaction evidence="4">
        <text>GTP + ATP = pppGp(2'-5')A + diphosphate</text>
        <dbReference type="Rhea" id="RHEA:23748"/>
        <dbReference type="ChEBI" id="CHEBI:30616"/>
        <dbReference type="ChEBI" id="CHEBI:33019"/>
        <dbReference type="ChEBI" id="CHEBI:37565"/>
        <dbReference type="ChEBI" id="CHEBI:78318"/>
    </reaction>
    <physiologicalReaction direction="left-to-right" evidence="4">
        <dbReference type="Rhea" id="RHEA:23749"/>
    </physiologicalReaction>
</comment>
<comment type="catalytic activity">
    <reaction evidence="4">
        <text>pppGp(2'-5')A = 2',3'-cGAMP + diphosphate</text>
        <dbReference type="Rhea" id="RHEA:23924"/>
        <dbReference type="ChEBI" id="CHEBI:33019"/>
        <dbReference type="ChEBI" id="CHEBI:78318"/>
        <dbReference type="ChEBI" id="CHEBI:143093"/>
    </reaction>
    <physiologicalReaction direction="left-to-right" evidence="4">
        <dbReference type="Rhea" id="RHEA:23925"/>
    </physiologicalReaction>
</comment>
<comment type="cofactor">
    <cofactor evidence="1">
        <name>Mg(2+)</name>
        <dbReference type="ChEBI" id="CHEBI:18420"/>
    </cofactor>
    <cofactor evidence="1">
        <name>Mn(2+)</name>
        <dbReference type="ChEBI" id="CHEBI:29035"/>
    </cofactor>
</comment>
<comment type="similarity">
    <text evidence="6">Belongs to the mab-21 family.</text>
</comment>